<accession>Q2JFE8</accession>
<keyword id="KW-0240">DNA-directed RNA polymerase</keyword>
<keyword id="KW-0548">Nucleotidyltransferase</keyword>
<keyword id="KW-1185">Reference proteome</keyword>
<keyword id="KW-0804">Transcription</keyword>
<keyword id="KW-0808">Transferase</keyword>
<sequence length="349" mass="37859">MLIAQRPTLIEDPISEFRSRFVIEPLEPGFGYTLGNSLRRTLLSSIPGASVTSIRIDGVLHEFSTVPGVKEDVTDLILNLKELVVSSDNDEPTVMYLRKQGPGEVTAADIAPPAGVEVHNPELRLATLNDKGKLEIELTVERGRGYVSAAQNKQAGQEIGRIPIDSIYSPVLKVTYKVEATRVEQRTDFDRLIVDVETKPSISPRDAMASAGKTLVGLFGLAQELNAEAEGVDIGPSAADAALAADLALPIEEMDLTVRSYNCLKREGIHTIGELVSRSEADLLDIRNFGQKSIDEVKTKLGAMGLQLKDSPPGFDPRQAVDTYGTDAYSPSFSDPSDDGAEFIETEQY</sequence>
<dbReference type="EC" id="2.7.7.6" evidence="1"/>
<dbReference type="EMBL" id="CP000249">
    <property type="protein sequence ID" value="ABD09994.1"/>
    <property type="molecule type" value="Genomic_DNA"/>
</dbReference>
<dbReference type="RefSeq" id="WP_011435063.1">
    <property type="nucleotide sequence ID" value="NZ_JENI01000019.1"/>
</dbReference>
<dbReference type="SMR" id="Q2JFE8"/>
<dbReference type="STRING" id="106370.Francci3_0610"/>
<dbReference type="KEGG" id="fra:Francci3_0610"/>
<dbReference type="eggNOG" id="COG0202">
    <property type="taxonomic scope" value="Bacteria"/>
</dbReference>
<dbReference type="HOGENOM" id="CLU_053084_0_1_11"/>
<dbReference type="OrthoDB" id="9805706at2"/>
<dbReference type="PhylomeDB" id="Q2JFE8"/>
<dbReference type="Proteomes" id="UP000001937">
    <property type="component" value="Chromosome"/>
</dbReference>
<dbReference type="GO" id="GO:0005737">
    <property type="term" value="C:cytoplasm"/>
    <property type="evidence" value="ECO:0007669"/>
    <property type="project" value="UniProtKB-ARBA"/>
</dbReference>
<dbReference type="GO" id="GO:0000428">
    <property type="term" value="C:DNA-directed RNA polymerase complex"/>
    <property type="evidence" value="ECO:0007669"/>
    <property type="project" value="UniProtKB-KW"/>
</dbReference>
<dbReference type="GO" id="GO:0003677">
    <property type="term" value="F:DNA binding"/>
    <property type="evidence" value="ECO:0007669"/>
    <property type="project" value="UniProtKB-UniRule"/>
</dbReference>
<dbReference type="GO" id="GO:0003899">
    <property type="term" value="F:DNA-directed RNA polymerase activity"/>
    <property type="evidence" value="ECO:0007669"/>
    <property type="project" value="UniProtKB-UniRule"/>
</dbReference>
<dbReference type="GO" id="GO:0046983">
    <property type="term" value="F:protein dimerization activity"/>
    <property type="evidence" value="ECO:0007669"/>
    <property type="project" value="InterPro"/>
</dbReference>
<dbReference type="GO" id="GO:0006351">
    <property type="term" value="P:DNA-templated transcription"/>
    <property type="evidence" value="ECO:0007669"/>
    <property type="project" value="UniProtKB-UniRule"/>
</dbReference>
<dbReference type="CDD" id="cd06928">
    <property type="entry name" value="RNAP_alpha_NTD"/>
    <property type="match status" value="1"/>
</dbReference>
<dbReference type="FunFam" id="1.10.150.20:FF:000001">
    <property type="entry name" value="DNA-directed RNA polymerase subunit alpha"/>
    <property type="match status" value="1"/>
</dbReference>
<dbReference type="FunFam" id="2.170.120.12:FF:000001">
    <property type="entry name" value="DNA-directed RNA polymerase subunit alpha"/>
    <property type="match status" value="1"/>
</dbReference>
<dbReference type="Gene3D" id="1.10.150.20">
    <property type="entry name" value="5' to 3' exonuclease, C-terminal subdomain"/>
    <property type="match status" value="1"/>
</dbReference>
<dbReference type="Gene3D" id="2.170.120.12">
    <property type="entry name" value="DNA-directed RNA polymerase, insert domain"/>
    <property type="match status" value="1"/>
</dbReference>
<dbReference type="Gene3D" id="3.30.1360.10">
    <property type="entry name" value="RNA polymerase, RBP11-like subunit"/>
    <property type="match status" value="1"/>
</dbReference>
<dbReference type="HAMAP" id="MF_00059">
    <property type="entry name" value="RNApol_bact_RpoA"/>
    <property type="match status" value="1"/>
</dbReference>
<dbReference type="InterPro" id="IPR011262">
    <property type="entry name" value="DNA-dir_RNA_pol_insert"/>
</dbReference>
<dbReference type="InterPro" id="IPR011263">
    <property type="entry name" value="DNA-dir_RNA_pol_RpoA/D/Rpb3"/>
</dbReference>
<dbReference type="InterPro" id="IPR011773">
    <property type="entry name" value="DNA-dir_RpoA"/>
</dbReference>
<dbReference type="InterPro" id="IPR036603">
    <property type="entry name" value="RBP11-like"/>
</dbReference>
<dbReference type="InterPro" id="IPR011260">
    <property type="entry name" value="RNAP_asu_C"/>
</dbReference>
<dbReference type="InterPro" id="IPR036643">
    <property type="entry name" value="RNApol_insert_sf"/>
</dbReference>
<dbReference type="NCBIfam" id="NF003513">
    <property type="entry name" value="PRK05182.1-2"/>
    <property type="match status" value="1"/>
</dbReference>
<dbReference type="NCBIfam" id="NF003514">
    <property type="entry name" value="PRK05182.1-4"/>
    <property type="match status" value="1"/>
</dbReference>
<dbReference type="NCBIfam" id="NF003519">
    <property type="entry name" value="PRK05182.2-5"/>
    <property type="match status" value="1"/>
</dbReference>
<dbReference type="NCBIfam" id="TIGR02027">
    <property type="entry name" value="rpoA"/>
    <property type="match status" value="1"/>
</dbReference>
<dbReference type="Pfam" id="PF01000">
    <property type="entry name" value="RNA_pol_A_bac"/>
    <property type="match status" value="1"/>
</dbReference>
<dbReference type="Pfam" id="PF03118">
    <property type="entry name" value="RNA_pol_A_CTD"/>
    <property type="match status" value="1"/>
</dbReference>
<dbReference type="Pfam" id="PF01193">
    <property type="entry name" value="RNA_pol_L"/>
    <property type="match status" value="1"/>
</dbReference>
<dbReference type="SMART" id="SM00662">
    <property type="entry name" value="RPOLD"/>
    <property type="match status" value="1"/>
</dbReference>
<dbReference type="SUPFAM" id="SSF47789">
    <property type="entry name" value="C-terminal domain of RNA polymerase alpha subunit"/>
    <property type="match status" value="1"/>
</dbReference>
<dbReference type="SUPFAM" id="SSF56553">
    <property type="entry name" value="Insert subdomain of RNA polymerase alpha subunit"/>
    <property type="match status" value="1"/>
</dbReference>
<dbReference type="SUPFAM" id="SSF55257">
    <property type="entry name" value="RBP11-like subunits of RNA polymerase"/>
    <property type="match status" value="1"/>
</dbReference>
<proteinExistence type="inferred from homology"/>
<reference key="1">
    <citation type="journal article" date="2007" name="Genome Res.">
        <title>Genome characteristics of facultatively symbiotic Frankia sp. strains reflect host range and host plant biogeography.</title>
        <authorList>
            <person name="Normand P."/>
            <person name="Lapierre P."/>
            <person name="Tisa L.S."/>
            <person name="Gogarten J.P."/>
            <person name="Alloisio N."/>
            <person name="Bagnarol E."/>
            <person name="Bassi C.A."/>
            <person name="Berry A.M."/>
            <person name="Bickhart D.M."/>
            <person name="Choisne N."/>
            <person name="Couloux A."/>
            <person name="Cournoyer B."/>
            <person name="Cruveiller S."/>
            <person name="Daubin V."/>
            <person name="Demange N."/>
            <person name="Francino M.P."/>
            <person name="Goltsman E."/>
            <person name="Huang Y."/>
            <person name="Kopp O.R."/>
            <person name="Labarre L."/>
            <person name="Lapidus A."/>
            <person name="Lavire C."/>
            <person name="Marechal J."/>
            <person name="Martinez M."/>
            <person name="Mastronunzio J.E."/>
            <person name="Mullin B.C."/>
            <person name="Niemann J."/>
            <person name="Pujic P."/>
            <person name="Rawnsley T."/>
            <person name="Rouy Z."/>
            <person name="Schenowitz C."/>
            <person name="Sellstedt A."/>
            <person name="Tavares F."/>
            <person name="Tomkins J.P."/>
            <person name="Vallenet D."/>
            <person name="Valverde C."/>
            <person name="Wall L.G."/>
            <person name="Wang Y."/>
            <person name="Medigue C."/>
            <person name="Benson D.R."/>
        </authorList>
    </citation>
    <scope>NUCLEOTIDE SEQUENCE [LARGE SCALE GENOMIC DNA]</scope>
    <source>
        <strain>DSM 45818 / CECT 9043 / HFP020203 / CcI3</strain>
    </source>
</reference>
<name>RPOA_FRACC</name>
<gene>
    <name evidence="1" type="primary">rpoA</name>
    <name type="ordered locus">Francci3_0610</name>
</gene>
<organism>
    <name type="scientific">Frankia casuarinae (strain DSM 45818 / CECT 9043 / HFP020203 / CcI3)</name>
    <dbReference type="NCBI Taxonomy" id="106370"/>
    <lineage>
        <taxon>Bacteria</taxon>
        <taxon>Bacillati</taxon>
        <taxon>Actinomycetota</taxon>
        <taxon>Actinomycetes</taxon>
        <taxon>Frankiales</taxon>
        <taxon>Frankiaceae</taxon>
        <taxon>Frankia</taxon>
    </lineage>
</organism>
<feature type="chain" id="PRO_0000264501" description="DNA-directed RNA polymerase subunit alpha">
    <location>
        <begin position="1"/>
        <end position="349"/>
    </location>
</feature>
<feature type="region of interest" description="Alpha N-terminal domain (alpha-NTD)" evidence="1">
    <location>
        <begin position="1"/>
        <end position="226"/>
    </location>
</feature>
<feature type="region of interest" description="Alpha C-terminal domain (alpha-CTD)" evidence="1">
    <location>
        <begin position="241"/>
        <end position="349"/>
    </location>
</feature>
<feature type="region of interest" description="Disordered" evidence="2">
    <location>
        <begin position="309"/>
        <end position="349"/>
    </location>
</feature>
<feature type="compositionally biased region" description="Acidic residues" evidence="2">
    <location>
        <begin position="336"/>
        <end position="349"/>
    </location>
</feature>
<comment type="function">
    <text evidence="1">DNA-dependent RNA polymerase catalyzes the transcription of DNA into RNA using the four ribonucleoside triphosphates as substrates.</text>
</comment>
<comment type="catalytic activity">
    <reaction evidence="1">
        <text>RNA(n) + a ribonucleoside 5'-triphosphate = RNA(n+1) + diphosphate</text>
        <dbReference type="Rhea" id="RHEA:21248"/>
        <dbReference type="Rhea" id="RHEA-COMP:14527"/>
        <dbReference type="Rhea" id="RHEA-COMP:17342"/>
        <dbReference type="ChEBI" id="CHEBI:33019"/>
        <dbReference type="ChEBI" id="CHEBI:61557"/>
        <dbReference type="ChEBI" id="CHEBI:140395"/>
        <dbReference type="EC" id="2.7.7.6"/>
    </reaction>
</comment>
<comment type="subunit">
    <text evidence="1">Homodimer. The RNAP catalytic core consists of 2 alpha, 1 beta, 1 beta' and 1 omega subunit. When a sigma factor is associated with the core the holoenzyme is formed, which can initiate transcription.</text>
</comment>
<comment type="domain">
    <text evidence="1">The N-terminal domain is essential for RNAP assembly and basal transcription, whereas the C-terminal domain is involved in interaction with transcriptional regulators and with upstream promoter elements.</text>
</comment>
<comment type="similarity">
    <text evidence="1">Belongs to the RNA polymerase alpha chain family.</text>
</comment>
<evidence type="ECO:0000255" key="1">
    <source>
        <dbReference type="HAMAP-Rule" id="MF_00059"/>
    </source>
</evidence>
<evidence type="ECO:0000256" key="2">
    <source>
        <dbReference type="SAM" id="MobiDB-lite"/>
    </source>
</evidence>
<protein>
    <recommendedName>
        <fullName evidence="1">DNA-directed RNA polymerase subunit alpha</fullName>
        <shortName evidence="1">RNAP subunit alpha</shortName>
        <ecNumber evidence="1">2.7.7.6</ecNumber>
    </recommendedName>
    <alternativeName>
        <fullName evidence="1">RNA polymerase subunit alpha</fullName>
    </alternativeName>
    <alternativeName>
        <fullName evidence="1">Transcriptase subunit alpha</fullName>
    </alternativeName>
</protein>